<keyword id="KW-0002">3D-structure</keyword>
<keyword id="KW-0227">DNA damage</keyword>
<keyword id="KW-0234">DNA repair</keyword>
<keyword id="KW-0238">DNA-binding</keyword>
<keyword id="KW-0255">Endonuclease</keyword>
<keyword id="KW-0378">Hydrolase</keyword>
<keyword id="KW-0540">Nuclease</keyword>
<keyword id="KW-1185">Reference proteome</keyword>
<dbReference type="EC" id="3.1.-.-" evidence="1"/>
<dbReference type="EMBL" id="BA000023">
    <property type="protein sequence ID" value="BAB66692.1"/>
    <property type="molecule type" value="Genomic_DNA"/>
</dbReference>
<dbReference type="RefSeq" id="WP_010979670.1">
    <property type="nucleotide sequence ID" value="NC_003106.2"/>
</dbReference>
<dbReference type="PDB" id="6P4F">
    <property type="method" value="X-ray"/>
    <property type="resolution" value="3.55 A"/>
    <property type="chains" value="B/D=2-372"/>
</dbReference>
<dbReference type="PDB" id="6P4O">
    <property type="method" value="X-ray"/>
    <property type="resolution" value="3.15 A"/>
    <property type="chains" value="B/D/F=1-481"/>
</dbReference>
<dbReference type="PDB" id="6P4W">
    <property type="method" value="X-ray"/>
    <property type="resolution" value="2.96 A"/>
    <property type="chains" value="B/D=2-373"/>
</dbReference>
<dbReference type="PDBsum" id="6P4F"/>
<dbReference type="PDBsum" id="6P4O"/>
<dbReference type="PDBsum" id="6P4W"/>
<dbReference type="SMR" id="Q970I1"/>
<dbReference type="STRING" id="273063.STK_16140"/>
<dbReference type="GeneID" id="1459656"/>
<dbReference type="KEGG" id="sto:STK_16140"/>
<dbReference type="PATRIC" id="fig|273063.9.peg.1840"/>
<dbReference type="eggNOG" id="arCOG04356">
    <property type="taxonomic scope" value="Archaea"/>
</dbReference>
<dbReference type="OrthoDB" id="57367at2157"/>
<dbReference type="Proteomes" id="UP000001015">
    <property type="component" value="Chromosome"/>
</dbReference>
<dbReference type="GO" id="GO:0003677">
    <property type="term" value="F:DNA binding"/>
    <property type="evidence" value="ECO:0007669"/>
    <property type="project" value="UniProtKB-KW"/>
</dbReference>
<dbReference type="GO" id="GO:0004519">
    <property type="term" value="F:endonuclease activity"/>
    <property type="evidence" value="ECO:0007669"/>
    <property type="project" value="UniProtKB-KW"/>
</dbReference>
<dbReference type="GO" id="GO:0006281">
    <property type="term" value="P:DNA repair"/>
    <property type="evidence" value="ECO:0007669"/>
    <property type="project" value="UniProtKB-KW"/>
</dbReference>
<dbReference type="InterPro" id="IPR008508">
    <property type="entry name" value="Bax1"/>
</dbReference>
<dbReference type="PANTHER" id="PTHR39640:SF1">
    <property type="entry name" value="DUF790 FAMILY PROTEIN"/>
    <property type="match status" value="1"/>
</dbReference>
<dbReference type="PANTHER" id="PTHR39640">
    <property type="entry name" value="VNG6129C"/>
    <property type="match status" value="1"/>
</dbReference>
<dbReference type="Pfam" id="PF05626">
    <property type="entry name" value="DUF790"/>
    <property type="match status" value="1"/>
</dbReference>
<dbReference type="PIRSF" id="PIRSF019435">
    <property type="entry name" value="UCP019435"/>
    <property type="match status" value="1"/>
</dbReference>
<accession>Q970I1</accession>
<sequence>MLPWELARFSIVKDEVLPHFATNEDLDLANEIISLFKAGKKLGEIDEEIEYLEKIYDHKLVRAFVKLLTRLCEFELDSPIPPIQIRRELFKYGPVLDEKEREDIIQKVSKKLGADIMRFVFSDLDEEKKIIKAPTISAEDLIRWYNLSLLQTLLFKAYKLTVYVSSNWKEIIRRAKWLGLMYFAYDKPLRFEFLGPATLVKLTEKYGRNLAVLLQFIISSQNWKIEAELVLGKKFKRVYKLKLANFKELKELVIDEKRFDSSVEEKFYKDFTNVIKGWKIIREPEPLVVDNRVFIPDFLVEKGNLKVYVEIVGFWTKEYIKEKLDKLKKVKYPILILLNEELGKEKFNGMNVITYKRKIDISLVYKWLRELENKYLNEVKVDYTISGDIISLNEIASKLSLPVEVIRKNIKIFPGYIFLKNYYVSEKFLEKLRNENFDNKSLKELVSAYGDYIVEVLEFLGYKLKWQGISDAIVIKDKKVN</sequence>
<gene>
    <name evidence="9" type="primary">bax1</name>
    <name type="synonym">ST1614</name>
    <name evidence="9" type="ordered locus">STK_16140</name>
</gene>
<proteinExistence type="evidence at protein level"/>
<feature type="chain" id="PRO_0000460188" description="Endonuclease Bax1">
    <location>
        <begin position="1"/>
        <end position="481"/>
    </location>
</feature>
<feature type="region of interest" description="N-terminal domain (NTD)" evidence="3 4">
    <location>
        <begin position="1"/>
        <end position="136"/>
    </location>
</feature>
<feature type="region of interest" description="Central domain (CRD)" evidence="3 4">
    <location>
        <begin position="158"/>
        <end position="250"/>
    </location>
</feature>
<feature type="region of interest" description="Nuclease domain (NUS)" evidence="3 4">
    <location>
        <begin position="260"/>
        <end position="364"/>
    </location>
</feature>
<feature type="region of interest" description="C-terminal domain (CTD)" evidence="3">
    <location>
        <begin position="414"/>
        <end position="481"/>
    </location>
</feature>
<feature type="binding site" evidence="1">
    <location>
        <position position="265"/>
    </location>
    <ligand>
        <name>a divalent metal cation</name>
        <dbReference type="ChEBI" id="CHEBI:60240"/>
    </ligand>
</feature>
<feature type="binding site" evidence="1">
    <location>
        <position position="297"/>
    </location>
    <ligand>
        <name>a divalent metal cation</name>
        <dbReference type="ChEBI" id="CHEBI:60240"/>
    </ligand>
</feature>
<feature type="binding site" evidence="1">
    <location>
        <position position="310"/>
    </location>
    <ligand>
        <name>a divalent metal cation</name>
        <dbReference type="ChEBI" id="CHEBI:60240"/>
    </ligand>
</feature>
<feature type="mutagenesis site" description="2-fold increased affinity for XPB2." evidence="3">
    <original>LFKYGPV</original>
    <variation>AAKYGSS</variation>
    <location>
        <begin position="89"/>
        <end position="95"/>
    </location>
</feature>
<feature type="helix" evidence="14">
    <location>
        <begin position="4"/>
        <end position="6"/>
    </location>
</feature>
<feature type="strand" evidence="14">
    <location>
        <begin position="9"/>
        <end position="12"/>
    </location>
</feature>
<feature type="strand" evidence="14">
    <location>
        <begin position="15"/>
        <end position="18"/>
    </location>
</feature>
<feature type="helix" evidence="14">
    <location>
        <begin position="23"/>
        <end position="25"/>
    </location>
</feature>
<feature type="helix" evidence="14">
    <location>
        <begin position="26"/>
        <end position="35"/>
    </location>
</feature>
<feature type="helix" evidence="14">
    <location>
        <begin position="42"/>
        <end position="48"/>
    </location>
</feature>
<feature type="turn" evidence="14">
    <location>
        <begin position="49"/>
        <end position="51"/>
    </location>
</feature>
<feature type="helix" evidence="14">
    <location>
        <begin position="52"/>
        <end position="55"/>
    </location>
</feature>
<feature type="helix" evidence="14">
    <location>
        <begin position="58"/>
        <end position="70"/>
    </location>
</feature>
<feature type="helix" evidence="14">
    <location>
        <begin position="82"/>
        <end position="90"/>
    </location>
</feature>
<feature type="helix" evidence="14">
    <location>
        <begin position="98"/>
        <end position="112"/>
    </location>
</feature>
<feature type="helix" evidence="14">
    <location>
        <begin position="116"/>
        <end position="119"/>
    </location>
</feature>
<feature type="turn" evidence="14">
    <location>
        <begin position="120"/>
        <end position="123"/>
    </location>
</feature>
<feature type="helix" evidence="14">
    <location>
        <begin position="125"/>
        <end position="127"/>
    </location>
</feature>
<feature type="strand" evidence="13">
    <location>
        <begin position="130"/>
        <end position="132"/>
    </location>
</feature>
<feature type="helix" evidence="14">
    <location>
        <begin position="138"/>
        <end position="154"/>
    </location>
</feature>
<feature type="strand" evidence="14">
    <location>
        <begin position="157"/>
        <end position="163"/>
    </location>
</feature>
<feature type="strand" evidence="13">
    <location>
        <begin position="165"/>
        <end position="167"/>
    </location>
</feature>
<feature type="helix" evidence="14">
    <location>
        <begin position="168"/>
        <end position="177"/>
    </location>
</feature>
<feature type="strand" evidence="14">
    <location>
        <begin position="182"/>
        <end position="185"/>
    </location>
</feature>
<feature type="turn" evidence="14">
    <location>
        <begin position="186"/>
        <end position="189"/>
    </location>
</feature>
<feature type="strand" evidence="14">
    <location>
        <begin position="190"/>
        <end position="194"/>
    </location>
</feature>
<feature type="turn" evidence="14">
    <location>
        <begin position="196"/>
        <end position="198"/>
    </location>
</feature>
<feature type="strand" evidence="14">
    <location>
        <begin position="200"/>
        <end position="202"/>
    </location>
</feature>
<feature type="helix" evidence="14">
    <location>
        <begin position="203"/>
        <end position="219"/>
    </location>
</feature>
<feature type="strand" evidence="14">
    <location>
        <begin position="220"/>
        <end position="222"/>
    </location>
</feature>
<feature type="strand" evidence="14">
    <location>
        <begin position="224"/>
        <end position="231"/>
    </location>
</feature>
<feature type="strand" evidence="14">
    <location>
        <begin position="233"/>
        <end position="235"/>
    </location>
</feature>
<feature type="strand" evidence="14">
    <location>
        <begin position="237"/>
        <end position="245"/>
    </location>
</feature>
<feature type="helix" evidence="14">
    <location>
        <begin position="262"/>
        <end position="274"/>
    </location>
</feature>
<feature type="strand" evidence="14">
    <location>
        <begin position="277"/>
        <end position="283"/>
    </location>
</feature>
<feature type="strand" evidence="14">
    <location>
        <begin position="287"/>
        <end position="294"/>
    </location>
</feature>
<feature type="strand" evidence="14">
    <location>
        <begin position="297"/>
        <end position="302"/>
    </location>
</feature>
<feature type="strand" evidence="14">
    <location>
        <begin position="305"/>
        <end position="314"/>
    </location>
</feature>
<feature type="helix" evidence="14">
    <location>
        <begin position="317"/>
        <end position="327"/>
    </location>
</feature>
<feature type="helix" evidence="14">
    <location>
        <begin position="328"/>
        <end position="330"/>
    </location>
</feature>
<feature type="strand" evidence="14">
    <location>
        <begin position="334"/>
        <end position="340"/>
    </location>
</feature>
<feature type="strand" evidence="13">
    <location>
        <begin position="341"/>
        <end position="343"/>
    </location>
</feature>
<feature type="strand" evidence="14">
    <location>
        <begin position="352"/>
        <end position="358"/>
    </location>
</feature>
<feature type="helix" evidence="14">
    <location>
        <begin position="361"/>
        <end position="372"/>
    </location>
</feature>
<feature type="strand" evidence="13">
    <location>
        <begin position="387"/>
        <end position="389"/>
    </location>
</feature>
<feature type="helix" evidence="13">
    <location>
        <begin position="392"/>
        <end position="398"/>
    </location>
</feature>
<feature type="helix" evidence="13">
    <location>
        <begin position="403"/>
        <end position="408"/>
    </location>
</feature>
<feature type="strand" evidence="13">
    <location>
        <begin position="414"/>
        <end position="417"/>
    </location>
</feature>
<feature type="helix" evidence="13">
    <location>
        <begin position="426"/>
        <end position="435"/>
    </location>
</feature>
<feature type="helix" evidence="13">
    <location>
        <begin position="444"/>
        <end position="449"/>
    </location>
</feature>
<feature type="helix" evidence="13">
    <location>
        <begin position="453"/>
        <end position="460"/>
    </location>
</feature>
<comment type="function">
    <text evidence="1 2 3 4">A dual DNA endonuclease probably involved in nucleotide excision repair (NER) (By similarity). The N-terminal nuclease domain (NTD) of the XPB2-Bax1 complex cleaves on one side of a DNA bubble (which presumably mimics DNA damage), while the NUS nuclease domain cleaves the other side, respectively called 5' and 3' nuclease activities (By similarity). Interaction with XPB blocks the NTD nuclease activity (By similarity). Binds to and stimulates the ATPase activity (and probably also helicase activity) of XPB2 (PubMed:21132514, PubMed:32374860). Increases affinity of XPB2 for forked DNA (PubMed:32986831). Does not stimulate the DNA-dependent activity of XPB1 (PubMed:21132514). In an XPB2-Bax1-bubble DNA crystal (12 bp of dsDNA, a 6 base bubble and 6 bp of dsDNA) the short 6 bp arm is unwound (PubMed:32986831). The 2 helicase and the ThM domains of XPB2 with the NTD and CRD domains of Bax1 encircle the DNA, forming a tunnel where the 12 bp dsDNA and the ds-ssDNA junction are located (PubMed:32986831). The ThM domain is wedged between the ssDNA tails, with the 5' ssDNA contacting Bax1 and the 3' ssDNA in a channel in XPB2 (PubMed:32986831). The nuclease domain (NUS) of Bax1 does not contact DNA in the bubble DNA complex (PubMed:32986831).</text>
</comment>
<comment type="cofactor">
    <cofactor evidence="8">
        <name>a divalent metal cation</name>
        <dbReference type="ChEBI" id="CHEBI:60240"/>
    </cofactor>
</comment>
<comment type="subunit">
    <text evidence="2 3">Homodimer in solution, forms a heterodimer with XPB2 (PubMed:21132514, PubMed:32374860).</text>
</comment>
<comment type="domain">
    <text evidence="1 3 4">Has 4 structural domains; the N-terminus (residues 1-136, NTD) interacts with XPB, the central domain (residues 158-250, CRD), the nuclease domain (residues 260-364, NUS), and the C-terminal domain (residues 414-481, CTD) (PubMed:32374860). The CTD (residues 374-481) is not required for DNA-binding (PubMed:32986831). The 2 nuclease domains are found in the NTD and NUS domains (By similarity).</text>
</comment>
<comment type="similarity">
    <text evidence="7">Belongs to the Bax1 family.</text>
</comment>
<organism>
    <name type="scientific">Sulfurisphaera tokodaii (strain DSM 16993 / JCM 10545 / NBRC 100140 / 7)</name>
    <name type="common">Sulfolobus tokodaii</name>
    <dbReference type="NCBI Taxonomy" id="273063"/>
    <lineage>
        <taxon>Archaea</taxon>
        <taxon>Thermoproteota</taxon>
        <taxon>Thermoprotei</taxon>
        <taxon>Sulfolobales</taxon>
        <taxon>Sulfolobaceae</taxon>
        <taxon>Sulfurisphaera</taxon>
    </lineage>
</organism>
<name>BAX1_SULTO</name>
<evidence type="ECO:0000250" key="1">
    <source>
        <dbReference type="UniProtKB" id="O29890"/>
    </source>
</evidence>
<evidence type="ECO:0000269" key="2">
    <source>
    </source>
</evidence>
<evidence type="ECO:0000269" key="3">
    <source>
    </source>
</evidence>
<evidence type="ECO:0000269" key="4">
    <source>
    </source>
</evidence>
<evidence type="ECO:0000303" key="5">
    <source>
    </source>
</evidence>
<evidence type="ECO:0000303" key="6">
    <source>
    </source>
</evidence>
<evidence type="ECO:0000305" key="7"/>
<evidence type="ECO:0000305" key="8">
    <source>
    </source>
</evidence>
<evidence type="ECO:0000312" key="9">
    <source>
        <dbReference type="EMBL" id="BAB66692.1"/>
    </source>
</evidence>
<evidence type="ECO:0007744" key="10">
    <source>
        <dbReference type="PDB" id="6P4F"/>
    </source>
</evidence>
<evidence type="ECO:0007744" key="11">
    <source>
        <dbReference type="PDB" id="6P4O"/>
    </source>
</evidence>
<evidence type="ECO:0007744" key="12">
    <source>
        <dbReference type="PDB" id="6P4W"/>
    </source>
</evidence>
<evidence type="ECO:0007829" key="13">
    <source>
        <dbReference type="PDB" id="6P4O"/>
    </source>
</evidence>
<evidence type="ECO:0007829" key="14">
    <source>
        <dbReference type="PDB" id="6P4W"/>
    </source>
</evidence>
<protein>
    <recommendedName>
        <fullName evidence="6">Endonuclease Bax1</fullName>
        <ecNumber evidence="1">3.1.-.-</ecNumber>
    </recommendedName>
    <alternativeName>
        <fullName evidence="5">StoBax1</fullName>
    </alternativeName>
</protein>
<reference evidence="9" key="1">
    <citation type="journal article" date="2001" name="DNA Res.">
        <title>Complete genome sequence of an aerobic thermoacidophilic Crenarchaeon, Sulfolobus tokodaii strain7.</title>
        <authorList>
            <person name="Kawarabayasi Y."/>
            <person name="Hino Y."/>
            <person name="Horikawa H."/>
            <person name="Jin-no K."/>
            <person name="Takahashi M."/>
            <person name="Sekine M."/>
            <person name="Baba S."/>
            <person name="Ankai A."/>
            <person name="Kosugi H."/>
            <person name="Hosoyama A."/>
            <person name="Fukui S."/>
            <person name="Nagai Y."/>
            <person name="Nishijima K."/>
            <person name="Otsuka R."/>
            <person name="Nakazawa H."/>
            <person name="Takamiya M."/>
            <person name="Kato Y."/>
            <person name="Yoshizawa T."/>
            <person name="Tanaka T."/>
            <person name="Kudoh Y."/>
            <person name="Yamazaki J."/>
            <person name="Kushida N."/>
            <person name="Oguchi A."/>
            <person name="Aoki K."/>
            <person name="Masuda S."/>
            <person name="Yanagii M."/>
            <person name="Nishimura M."/>
            <person name="Yamagishi A."/>
            <person name="Oshima T."/>
            <person name="Kikuchi H."/>
        </authorList>
    </citation>
    <scope>NUCLEOTIDE SEQUENCE [LARGE SCALE GENOMIC DNA]</scope>
    <source>
        <strain>DSM 16993 / JCM 10545 / NBRC 100140 / 7</strain>
    </source>
</reference>
<reference key="2">
    <citation type="journal article" date="2011" name="Extremophiles">
        <title>Single-stranded DNA binding activity of XPBI, but not XPBII, from Sulfolobus tokodaii causes double-stranded DNA melting.</title>
        <authorList>
            <person name="Ma X."/>
            <person name="Hong Y."/>
            <person name="Han W."/>
            <person name="Sheng D."/>
            <person name="Ni J."/>
            <person name="Hou G."/>
            <person name="Shen Y."/>
        </authorList>
    </citation>
    <scope>FUNCTION</scope>
    <scope>INTERACTION WITH XPB2</scope>
    <source>
        <strain>DSM 16993 / JCM 10545 / NBRC 100140 / 7</strain>
    </source>
</reference>
<reference evidence="11" key="3">
    <citation type="journal article" date="2020" name="Nucleic Acids Res.">
        <title>Structural basis of the XPB-Bax1 complex as a dynamic helicase-nuclease machinery for DNA repair.</title>
        <authorList>
            <person name="DuPrez K."/>
            <person name="He F."/>
            <person name="Chen Z."/>
            <person name="Hilario E."/>
            <person name="Fan L."/>
        </authorList>
    </citation>
    <scope>X-RAY CRYSTALLOGRAPHY (3.15 ANGSTROMS) IN COMPLEX WITH XPB2</scope>
    <scope>INTERACTION WITH XPB2</scope>
    <scope>DOMAIN</scope>
    <scope>MUTAGENESIS OF 89-LEU--VAL-95</scope>
</reference>
<reference evidence="10 12" key="4">
    <citation type="journal article" date="2020" name="Nucleic Acids Res.">
        <title>Structural basis of the XPB helicase-Bax1 nuclease complex interacting with the repair bubble DNA.</title>
        <authorList>
            <person name="He F."/>
            <person name="DuPrez K."/>
            <person name="Hilario E."/>
            <person name="Chen Z."/>
            <person name="Fan L."/>
        </authorList>
    </citation>
    <scope>X-RAY CRYSTALLOGRAPHY (2.96 ANGSTROMS) OF 2-373 IN COMPLEX WITH XPB2 WITH AND WITHOUT DNA</scope>
    <scope>INTERACTION WITH XPB2</scope>
    <scope>DOMAIN</scope>
    <scope>DNA-BINDING</scope>
</reference>